<sequence length="397" mass="42563">MIRYFTAGESHGPALSAIVEGLPAGLTVTPEDINKELARRQQGYGRGGRMKIETDKADVLSGIRFGKTIGSPVTLQVENRDWKNWTVKMARFDTPAEEIPAITVPRPGHADLTGMIKYGFEDIRPVIERASARETAARVAACALAKVFLRSAGIQIGSYVSSIGAAGKTAPSPRLHELLDAGAETLAEEADASSVRMLEKEHETHAIAAIDKAKEEGDTLGGIIELFITGVPMGLGSYVQHDRRLDAELAAALISIQAVKGVEIGTAFENARKPGSQVHDALFLRKGDGPERKTNRAGGIEGSMTNGQIIHLRAAMKPIATLMSPLQSFDIRSLDAHLSHIERSDTCAVPACSVIAEAVIAPVIANALLRKTGGDHLEEILERLEAYKADIAKNFQP</sequence>
<proteinExistence type="inferred from homology"/>
<protein>
    <recommendedName>
        <fullName evidence="1">Chorismate synthase</fullName>
        <shortName evidence="1">CS</shortName>
        <ecNumber evidence="1">4.2.3.5</ecNumber>
    </recommendedName>
    <alternativeName>
        <fullName evidence="1">5-enolpyruvylshikimate-3-phosphate phospholyase</fullName>
    </alternativeName>
</protein>
<comment type="function">
    <text evidence="1">Catalyzes the anti-1,4-elimination of the C-3 phosphate and the C-6 proR hydrogen from 5-enolpyruvylshikimate-3-phosphate (EPSP) to yield chorismate, which is the branch point compound that serves as the starting substrate for the three terminal pathways of aromatic amino acid biosynthesis. This reaction introduces a second double bond into the aromatic ring system.</text>
</comment>
<comment type="catalytic activity">
    <reaction evidence="1">
        <text>5-O-(1-carboxyvinyl)-3-phosphoshikimate = chorismate + phosphate</text>
        <dbReference type="Rhea" id="RHEA:21020"/>
        <dbReference type="ChEBI" id="CHEBI:29748"/>
        <dbReference type="ChEBI" id="CHEBI:43474"/>
        <dbReference type="ChEBI" id="CHEBI:57701"/>
        <dbReference type="EC" id="4.2.3.5"/>
    </reaction>
</comment>
<comment type="cofactor">
    <cofactor evidence="1">
        <name>FMNH2</name>
        <dbReference type="ChEBI" id="CHEBI:57618"/>
    </cofactor>
    <text evidence="1">Reduced FMN (FMNH(2)).</text>
</comment>
<comment type="pathway">
    <text evidence="1">Metabolic intermediate biosynthesis; chorismate biosynthesis; chorismate from D-erythrose 4-phosphate and phosphoenolpyruvate: step 7/7.</text>
</comment>
<comment type="subunit">
    <text evidence="1">Homotetramer.</text>
</comment>
<comment type="similarity">
    <text evidence="1">Belongs to the chorismate synthase family.</text>
</comment>
<accession>B3EPI9</accession>
<feature type="chain" id="PRO_1000115341" description="Chorismate synthase">
    <location>
        <begin position="1"/>
        <end position="397"/>
    </location>
</feature>
<feature type="binding site" evidence="1">
    <location>
        <position position="40"/>
    </location>
    <ligand>
        <name>NADP(+)</name>
        <dbReference type="ChEBI" id="CHEBI:58349"/>
    </ligand>
</feature>
<feature type="binding site" evidence="1">
    <location>
        <position position="46"/>
    </location>
    <ligand>
        <name>NADP(+)</name>
        <dbReference type="ChEBI" id="CHEBI:58349"/>
    </ligand>
</feature>
<feature type="binding site" evidence="1">
    <location>
        <begin position="129"/>
        <end position="131"/>
    </location>
    <ligand>
        <name>FMN</name>
        <dbReference type="ChEBI" id="CHEBI:58210"/>
    </ligand>
</feature>
<feature type="binding site" evidence="1">
    <location>
        <begin position="257"/>
        <end position="258"/>
    </location>
    <ligand>
        <name>FMN</name>
        <dbReference type="ChEBI" id="CHEBI:58210"/>
    </ligand>
</feature>
<feature type="binding site" evidence="1">
    <location>
        <position position="302"/>
    </location>
    <ligand>
        <name>FMN</name>
        <dbReference type="ChEBI" id="CHEBI:58210"/>
    </ligand>
</feature>
<feature type="binding site" evidence="1">
    <location>
        <begin position="317"/>
        <end position="321"/>
    </location>
    <ligand>
        <name>FMN</name>
        <dbReference type="ChEBI" id="CHEBI:58210"/>
    </ligand>
</feature>
<feature type="binding site" evidence="1">
    <location>
        <position position="343"/>
    </location>
    <ligand>
        <name>FMN</name>
        <dbReference type="ChEBI" id="CHEBI:58210"/>
    </ligand>
</feature>
<gene>
    <name evidence="1" type="primary">aroC</name>
    <name type="ordered locus">Cphamn1_0922</name>
</gene>
<evidence type="ECO:0000255" key="1">
    <source>
        <dbReference type="HAMAP-Rule" id="MF_00300"/>
    </source>
</evidence>
<name>AROC_CHLPB</name>
<reference key="1">
    <citation type="submission" date="2008-06" db="EMBL/GenBank/DDBJ databases">
        <title>Complete sequence of Chlorobium phaeobacteroides BS1.</title>
        <authorList>
            <consortium name="US DOE Joint Genome Institute"/>
            <person name="Lucas S."/>
            <person name="Copeland A."/>
            <person name="Lapidus A."/>
            <person name="Glavina del Rio T."/>
            <person name="Dalin E."/>
            <person name="Tice H."/>
            <person name="Bruce D."/>
            <person name="Goodwin L."/>
            <person name="Pitluck S."/>
            <person name="Schmutz J."/>
            <person name="Larimer F."/>
            <person name="Land M."/>
            <person name="Hauser L."/>
            <person name="Kyrpides N."/>
            <person name="Ovchinnikova G."/>
            <person name="Li T."/>
            <person name="Liu Z."/>
            <person name="Zhao F."/>
            <person name="Overmann J."/>
            <person name="Bryant D.A."/>
            <person name="Richardson P."/>
        </authorList>
    </citation>
    <scope>NUCLEOTIDE SEQUENCE [LARGE SCALE GENOMIC DNA]</scope>
    <source>
        <strain>BS1</strain>
    </source>
</reference>
<keyword id="KW-0028">Amino-acid biosynthesis</keyword>
<keyword id="KW-0057">Aromatic amino acid biosynthesis</keyword>
<keyword id="KW-0274">FAD</keyword>
<keyword id="KW-0285">Flavoprotein</keyword>
<keyword id="KW-0288">FMN</keyword>
<keyword id="KW-0456">Lyase</keyword>
<keyword id="KW-0521">NADP</keyword>
<organism>
    <name type="scientific">Chlorobium phaeobacteroides (strain BS1)</name>
    <dbReference type="NCBI Taxonomy" id="331678"/>
    <lineage>
        <taxon>Bacteria</taxon>
        <taxon>Pseudomonadati</taxon>
        <taxon>Chlorobiota</taxon>
        <taxon>Chlorobiia</taxon>
        <taxon>Chlorobiales</taxon>
        <taxon>Chlorobiaceae</taxon>
        <taxon>Chlorobium/Pelodictyon group</taxon>
        <taxon>Chlorobium</taxon>
    </lineage>
</organism>
<dbReference type="EC" id="4.2.3.5" evidence="1"/>
<dbReference type="EMBL" id="CP001101">
    <property type="protein sequence ID" value="ACE03867.1"/>
    <property type="molecule type" value="Genomic_DNA"/>
</dbReference>
<dbReference type="SMR" id="B3EPI9"/>
<dbReference type="STRING" id="331678.Cphamn1_0922"/>
<dbReference type="KEGG" id="cpb:Cphamn1_0922"/>
<dbReference type="eggNOG" id="COG0082">
    <property type="taxonomic scope" value="Bacteria"/>
</dbReference>
<dbReference type="HOGENOM" id="CLU_034547_2_0_10"/>
<dbReference type="OrthoDB" id="9771806at2"/>
<dbReference type="UniPathway" id="UPA00053">
    <property type="reaction ID" value="UER00090"/>
</dbReference>
<dbReference type="GO" id="GO:0005829">
    <property type="term" value="C:cytosol"/>
    <property type="evidence" value="ECO:0007669"/>
    <property type="project" value="TreeGrafter"/>
</dbReference>
<dbReference type="GO" id="GO:0004107">
    <property type="term" value="F:chorismate synthase activity"/>
    <property type="evidence" value="ECO:0007669"/>
    <property type="project" value="UniProtKB-UniRule"/>
</dbReference>
<dbReference type="GO" id="GO:0010181">
    <property type="term" value="F:FMN binding"/>
    <property type="evidence" value="ECO:0007669"/>
    <property type="project" value="TreeGrafter"/>
</dbReference>
<dbReference type="GO" id="GO:0008652">
    <property type="term" value="P:amino acid biosynthetic process"/>
    <property type="evidence" value="ECO:0007669"/>
    <property type="project" value="UniProtKB-KW"/>
</dbReference>
<dbReference type="GO" id="GO:0009073">
    <property type="term" value="P:aromatic amino acid family biosynthetic process"/>
    <property type="evidence" value="ECO:0007669"/>
    <property type="project" value="UniProtKB-KW"/>
</dbReference>
<dbReference type="GO" id="GO:0009423">
    <property type="term" value="P:chorismate biosynthetic process"/>
    <property type="evidence" value="ECO:0007669"/>
    <property type="project" value="UniProtKB-UniRule"/>
</dbReference>
<dbReference type="CDD" id="cd07304">
    <property type="entry name" value="Chorismate_synthase"/>
    <property type="match status" value="1"/>
</dbReference>
<dbReference type="FunFam" id="3.60.150.10:FF:000002">
    <property type="entry name" value="Chorismate synthase"/>
    <property type="match status" value="1"/>
</dbReference>
<dbReference type="Gene3D" id="3.60.150.10">
    <property type="entry name" value="Chorismate synthase AroC"/>
    <property type="match status" value="1"/>
</dbReference>
<dbReference type="HAMAP" id="MF_00300">
    <property type="entry name" value="Chorismate_synth"/>
    <property type="match status" value="1"/>
</dbReference>
<dbReference type="InterPro" id="IPR000453">
    <property type="entry name" value="Chorismate_synth"/>
</dbReference>
<dbReference type="InterPro" id="IPR035904">
    <property type="entry name" value="Chorismate_synth_AroC_sf"/>
</dbReference>
<dbReference type="InterPro" id="IPR020541">
    <property type="entry name" value="Chorismate_synthase_CS"/>
</dbReference>
<dbReference type="NCBIfam" id="TIGR00033">
    <property type="entry name" value="aroC"/>
    <property type="match status" value="1"/>
</dbReference>
<dbReference type="NCBIfam" id="NF003793">
    <property type="entry name" value="PRK05382.1"/>
    <property type="match status" value="1"/>
</dbReference>
<dbReference type="PANTHER" id="PTHR21085">
    <property type="entry name" value="CHORISMATE SYNTHASE"/>
    <property type="match status" value="1"/>
</dbReference>
<dbReference type="PANTHER" id="PTHR21085:SF0">
    <property type="entry name" value="CHORISMATE SYNTHASE"/>
    <property type="match status" value="1"/>
</dbReference>
<dbReference type="Pfam" id="PF01264">
    <property type="entry name" value="Chorismate_synt"/>
    <property type="match status" value="1"/>
</dbReference>
<dbReference type="PIRSF" id="PIRSF001456">
    <property type="entry name" value="Chorismate_synth"/>
    <property type="match status" value="1"/>
</dbReference>
<dbReference type="SUPFAM" id="SSF103263">
    <property type="entry name" value="Chorismate synthase, AroC"/>
    <property type="match status" value="1"/>
</dbReference>
<dbReference type="PROSITE" id="PS00787">
    <property type="entry name" value="CHORISMATE_SYNTHASE_1"/>
    <property type="match status" value="1"/>
</dbReference>